<sequence>MKTFVEIVDVYARQILDSRGNPTVEVEVELEDGTVGRAAVPSGASTGIFEAVELRDNDKSRYMGKSVEKAVENVNEIIAEELVGLNVFDQVALDKIMIELDGTDNKGKLGANAMLGVSLACARAAAEYLGISLYQYIGGVNAKVLPVPMMNIMNGGSHADNNVDLQEFMIMPAGAKSFSHALRMCAEIYHTLKNILKDKGLSTGVGDEGGFAPNLESNEEAIQVIIEAVEKAGYKPGEEVFIALDPASSEFFNTETNKYELKGEGRELTPAEMVEYYAKLVEKYPIISIEDGMAEEDWDGWKLMTEKLGGKIQLVGDDLFVTNTKRLSMGIERKVANSILIKLNQIGTLTETLNTIEMAERAGYTAVVSHRSGETEDTTIADLVVAVNAGQIKTGAPARTERVAKYNQLLRIEEELNAMGEYRGLKAFYNIRK</sequence>
<proteinExistence type="inferred from homology"/>
<feature type="chain" id="PRO_0000280843" description="Enolase">
    <location>
        <begin position="1"/>
        <end position="433"/>
    </location>
</feature>
<feature type="active site" description="Proton donor" evidence="1">
    <location>
        <position position="208"/>
    </location>
</feature>
<feature type="active site" description="Proton acceptor" evidence="1">
    <location>
        <position position="342"/>
    </location>
</feature>
<feature type="binding site" evidence="1">
    <location>
        <position position="166"/>
    </location>
    <ligand>
        <name>(2R)-2-phosphoglycerate</name>
        <dbReference type="ChEBI" id="CHEBI:58289"/>
    </ligand>
</feature>
<feature type="binding site" evidence="1">
    <location>
        <position position="245"/>
    </location>
    <ligand>
        <name>Mg(2+)</name>
        <dbReference type="ChEBI" id="CHEBI:18420"/>
    </ligand>
</feature>
<feature type="binding site" evidence="1">
    <location>
        <position position="290"/>
    </location>
    <ligand>
        <name>Mg(2+)</name>
        <dbReference type="ChEBI" id="CHEBI:18420"/>
    </ligand>
</feature>
<feature type="binding site" evidence="1">
    <location>
        <position position="317"/>
    </location>
    <ligand>
        <name>Mg(2+)</name>
        <dbReference type="ChEBI" id="CHEBI:18420"/>
    </ligand>
</feature>
<feature type="binding site" evidence="1">
    <location>
        <position position="342"/>
    </location>
    <ligand>
        <name>(2R)-2-phosphoglycerate</name>
        <dbReference type="ChEBI" id="CHEBI:58289"/>
    </ligand>
</feature>
<feature type="binding site" evidence="1">
    <location>
        <position position="371"/>
    </location>
    <ligand>
        <name>(2R)-2-phosphoglycerate</name>
        <dbReference type="ChEBI" id="CHEBI:58289"/>
    </ligand>
</feature>
<feature type="binding site" evidence="1">
    <location>
        <position position="372"/>
    </location>
    <ligand>
        <name>(2R)-2-phosphoglycerate</name>
        <dbReference type="ChEBI" id="CHEBI:58289"/>
    </ligand>
</feature>
<feature type="binding site" evidence="1">
    <location>
        <position position="393"/>
    </location>
    <ligand>
        <name>(2R)-2-phosphoglycerate</name>
        <dbReference type="ChEBI" id="CHEBI:58289"/>
    </ligand>
</feature>
<comment type="function">
    <text evidence="1">Catalyzes the reversible conversion of 2-phosphoglycerate (2-PG) into phosphoenolpyruvate (PEP). It is essential for the degradation of carbohydrates via glycolysis.</text>
</comment>
<comment type="catalytic activity">
    <reaction evidence="1">
        <text>(2R)-2-phosphoglycerate = phosphoenolpyruvate + H2O</text>
        <dbReference type="Rhea" id="RHEA:10164"/>
        <dbReference type="ChEBI" id="CHEBI:15377"/>
        <dbReference type="ChEBI" id="CHEBI:58289"/>
        <dbReference type="ChEBI" id="CHEBI:58702"/>
        <dbReference type="EC" id="4.2.1.11"/>
    </reaction>
</comment>
<comment type="cofactor">
    <cofactor evidence="1">
        <name>Mg(2+)</name>
        <dbReference type="ChEBI" id="CHEBI:18420"/>
    </cofactor>
    <text evidence="1">Binds a second Mg(2+) ion via substrate during catalysis.</text>
</comment>
<comment type="pathway">
    <text evidence="1">Carbohydrate degradation; glycolysis; pyruvate from D-glyceraldehyde 3-phosphate: step 4/5.</text>
</comment>
<comment type="subcellular location">
    <subcellularLocation>
        <location evidence="1">Cytoplasm</location>
    </subcellularLocation>
    <subcellularLocation>
        <location evidence="1">Secreted</location>
    </subcellularLocation>
    <subcellularLocation>
        <location evidence="1">Cell surface</location>
    </subcellularLocation>
    <text evidence="1">Fractions of enolase are present in both the cytoplasm and on the cell surface.</text>
</comment>
<comment type="similarity">
    <text evidence="1">Belongs to the enolase family.</text>
</comment>
<dbReference type="EC" id="4.2.1.11" evidence="1"/>
<dbReference type="EMBL" id="CP000382">
    <property type="protein sequence ID" value="ABK62079.1"/>
    <property type="molecule type" value="Genomic_DNA"/>
</dbReference>
<dbReference type="RefSeq" id="WP_011721504.1">
    <property type="nucleotide sequence ID" value="NC_008593.1"/>
</dbReference>
<dbReference type="SMR" id="A0PYP4"/>
<dbReference type="STRING" id="386415.NT01CX_1414"/>
<dbReference type="KEGG" id="cno:NT01CX_1414"/>
<dbReference type="eggNOG" id="COG0148">
    <property type="taxonomic scope" value="Bacteria"/>
</dbReference>
<dbReference type="HOGENOM" id="CLU_031223_2_1_9"/>
<dbReference type="UniPathway" id="UPA00109">
    <property type="reaction ID" value="UER00187"/>
</dbReference>
<dbReference type="Proteomes" id="UP000008220">
    <property type="component" value="Chromosome"/>
</dbReference>
<dbReference type="GO" id="GO:0009986">
    <property type="term" value="C:cell surface"/>
    <property type="evidence" value="ECO:0007669"/>
    <property type="project" value="UniProtKB-SubCell"/>
</dbReference>
<dbReference type="GO" id="GO:0005576">
    <property type="term" value="C:extracellular region"/>
    <property type="evidence" value="ECO:0007669"/>
    <property type="project" value="UniProtKB-SubCell"/>
</dbReference>
<dbReference type="GO" id="GO:0000015">
    <property type="term" value="C:phosphopyruvate hydratase complex"/>
    <property type="evidence" value="ECO:0007669"/>
    <property type="project" value="InterPro"/>
</dbReference>
<dbReference type="GO" id="GO:0000287">
    <property type="term" value="F:magnesium ion binding"/>
    <property type="evidence" value="ECO:0007669"/>
    <property type="project" value="UniProtKB-UniRule"/>
</dbReference>
<dbReference type="GO" id="GO:0004634">
    <property type="term" value="F:phosphopyruvate hydratase activity"/>
    <property type="evidence" value="ECO:0007669"/>
    <property type="project" value="UniProtKB-UniRule"/>
</dbReference>
<dbReference type="GO" id="GO:0006096">
    <property type="term" value="P:glycolytic process"/>
    <property type="evidence" value="ECO:0007669"/>
    <property type="project" value="UniProtKB-UniRule"/>
</dbReference>
<dbReference type="CDD" id="cd03313">
    <property type="entry name" value="enolase"/>
    <property type="match status" value="1"/>
</dbReference>
<dbReference type="FunFam" id="3.20.20.120:FF:000001">
    <property type="entry name" value="Enolase"/>
    <property type="match status" value="1"/>
</dbReference>
<dbReference type="FunFam" id="3.30.390.10:FF:000001">
    <property type="entry name" value="Enolase"/>
    <property type="match status" value="1"/>
</dbReference>
<dbReference type="Gene3D" id="3.20.20.120">
    <property type="entry name" value="Enolase-like C-terminal domain"/>
    <property type="match status" value="1"/>
</dbReference>
<dbReference type="Gene3D" id="3.30.390.10">
    <property type="entry name" value="Enolase-like, N-terminal domain"/>
    <property type="match status" value="1"/>
</dbReference>
<dbReference type="HAMAP" id="MF_00318">
    <property type="entry name" value="Enolase"/>
    <property type="match status" value="1"/>
</dbReference>
<dbReference type="InterPro" id="IPR000941">
    <property type="entry name" value="Enolase"/>
</dbReference>
<dbReference type="InterPro" id="IPR036849">
    <property type="entry name" value="Enolase-like_C_sf"/>
</dbReference>
<dbReference type="InterPro" id="IPR029017">
    <property type="entry name" value="Enolase-like_N"/>
</dbReference>
<dbReference type="InterPro" id="IPR020810">
    <property type="entry name" value="Enolase_C"/>
</dbReference>
<dbReference type="InterPro" id="IPR020809">
    <property type="entry name" value="Enolase_CS"/>
</dbReference>
<dbReference type="InterPro" id="IPR020811">
    <property type="entry name" value="Enolase_N"/>
</dbReference>
<dbReference type="NCBIfam" id="TIGR01060">
    <property type="entry name" value="eno"/>
    <property type="match status" value="1"/>
</dbReference>
<dbReference type="PANTHER" id="PTHR11902">
    <property type="entry name" value="ENOLASE"/>
    <property type="match status" value="1"/>
</dbReference>
<dbReference type="PANTHER" id="PTHR11902:SF1">
    <property type="entry name" value="ENOLASE"/>
    <property type="match status" value="1"/>
</dbReference>
<dbReference type="Pfam" id="PF00113">
    <property type="entry name" value="Enolase_C"/>
    <property type="match status" value="1"/>
</dbReference>
<dbReference type="Pfam" id="PF03952">
    <property type="entry name" value="Enolase_N"/>
    <property type="match status" value="1"/>
</dbReference>
<dbReference type="PIRSF" id="PIRSF001400">
    <property type="entry name" value="Enolase"/>
    <property type="match status" value="1"/>
</dbReference>
<dbReference type="PRINTS" id="PR00148">
    <property type="entry name" value="ENOLASE"/>
</dbReference>
<dbReference type="SFLD" id="SFLDF00002">
    <property type="entry name" value="enolase"/>
    <property type="match status" value="1"/>
</dbReference>
<dbReference type="SFLD" id="SFLDG00178">
    <property type="entry name" value="enolase"/>
    <property type="match status" value="1"/>
</dbReference>
<dbReference type="SMART" id="SM01192">
    <property type="entry name" value="Enolase_C"/>
    <property type="match status" value="1"/>
</dbReference>
<dbReference type="SMART" id="SM01193">
    <property type="entry name" value="Enolase_N"/>
    <property type="match status" value="1"/>
</dbReference>
<dbReference type="SUPFAM" id="SSF51604">
    <property type="entry name" value="Enolase C-terminal domain-like"/>
    <property type="match status" value="1"/>
</dbReference>
<dbReference type="SUPFAM" id="SSF54826">
    <property type="entry name" value="Enolase N-terminal domain-like"/>
    <property type="match status" value="1"/>
</dbReference>
<dbReference type="PROSITE" id="PS00164">
    <property type="entry name" value="ENOLASE"/>
    <property type="match status" value="1"/>
</dbReference>
<gene>
    <name evidence="1" type="primary">eno</name>
    <name type="ordered locus">NT01CX_1414</name>
</gene>
<protein>
    <recommendedName>
        <fullName evidence="1">Enolase</fullName>
        <ecNumber evidence="1">4.2.1.11</ecNumber>
    </recommendedName>
    <alternativeName>
        <fullName evidence="1">2-phospho-D-glycerate hydro-lyase</fullName>
    </alternativeName>
    <alternativeName>
        <fullName evidence="1">2-phosphoglycerate dehydratase</fullName>
    </alternativeName>
</protein>
<organism>
    <name type="scientific">Clostridium novyi (strain NT)</name>
    <dbReference type="NCBI Taxonomy" id="386415"/>
    <lineage>
        <taxon>Bacteria</taxon>
        <taxon>Bacillati</taxon>
        <taxon>Bacillota</taxon>
        <taxon>Clostridia</taxon>
        <taxon>Eubacteriales</taxon>
        <taxon>Clostridiaceae</taxon>
        <taxon>Clostridium</taxon>
    </lineage>
</organism>
<accession>A0PYP4</accession>
<reference key="1">
    <citation type="journal article" date="2006" name="Nat. Biotechnol.">
        <title>The genome and transcriptomes of the anti-tumor agent Clostridium novyi-NT.</title>
        <authorList>
            <person name="Bettegowda C."/>
            <person name="Huang X."/>
            <person name="Lin J."/>
            <person name="Cheong I."/>
            <person name="Kohli M."/>
            <person name="Szabo S.A."/>
            <person name="Zhang X."/>
            <person name="Diaz L.A. Jr."/>
            <person name="Velculescu V.E."/>
            <person name="Parmigiani G."/>
            <person name="Kinzler K.W."/>
            <person name="Vogelstein B."/>
            <person name="Zhou S."/>
        </authorList>
    </citation>
    <scope>NUCLEOTIDE SEQUENCE [LARGE SCALE GENOMIC DNA]</scope>
    <source>
        <strain>NT</strain>
    </source>
</reference>
<evidence type="ECO:0000255" key="1">
    <source>
        <dbReference type="HAMAP-Rule" id="MF_00318"/>
    </source>
</evidence>
<keyword id="KW-0963">Cytoplasm</keyword>
<keyword id="KW-0324">Glycolysis</keyword>
<keyword id="KW-0456">Lyase</keyword>
<keyword id="KW-0460">Magnesium</keyword>
<keyword id="KW-0479">Metal-binding</keyword>
<keyword id="KW-1185">Reference proteome</keyword>
<keyword id="KW-0964">Secreted</keyword>
<name>ENO_CLONN</name>